<comment type="function">
    <text evidence="1">Catalyzes the attachment of serine to tRNA(Ser). Is also able to aminoacylate tRNA(Sec) with serine, to form the misacylated tRNA L-seryl-tRNA(Sec), which will be further converted into selenocysteinyl-tRNA(Sec).</text>
</comment>
<comment type="catalytic activity">
    <reaction evidence="1">
        <text>tRNA(Ser) + L-serine + ATP = L-seryl-tRNA(Ser) + AMP + diphosphate + H(+)</text>
        <dbReference type="Rhea" id="RHEA:12292"/>
        <dbReference type="Rhea" id="RHEA-COMP:9669"/>
        <dbReference type="Rhea" id="RHEA-COMP:9703"/>
        <dbReference type="ChEBI" id="CHEBI:15378"/>
        <dbReference type="ChEBI" id="CHEBI:30616"/>
        <dbReference type="ChEBI" id="CHEBI:33019"/>
        <dbReference type="ChEBI" id="CHEBI:33384"/>
        <dbReference type="ChEBI" id="CHEBI:78442"/>
        <dbReference type="ChEBI" id="CHEBI:78533"/>
        <dbReference type="ChEBI" id="CHEBI:456215"/>
        <dbReference type="EC" id="6.1.1.11"/>
    </reaction>
</comment>
<comment type="catalytic activity">
    <reaction evidence="1">
        <text>tRNA(Sec) + L-serine + ATP = L-seryl-tRNA(Sec) + AMP + diphosphate + H(+)</text>
        <dbReference type="Rhea" id="RHEA:42580"/>
        <dbReference type="Rhea" id="RHEA-COMP:9742"/>
        <dbReference type="Rhea" id="RHEA-COMP:10128"/>
        <dbReference type="ChEBI" id="CHEBI:15378"/>
        <dbReference type="ChEBI" id="CHEBI:30616"/>
        <dbReference type="ChEBI" id="CHEBI:33019"/>
        <dbReference type="ChEBI" id="CHEBI:33384"/>
        <dbReference type="ChEBI" id="CHEBI:78442"/>
        <dbReference type="ChEBI" id="CHEBI:78533"/>
        <dbReference type="ChEBI" id="CHEBI:456215"/>
        <dbReference type="EC" id="6.1.1.11"/>
    </reaction>
</comment>
<comment type="pathway">
    <text evidence="1">Aminoacyl-tRNA biosynthesis; selenocysteinyl-tRNA(Sec) biosynthesis; L-seryl-tRNA(Sec) from L-serine and tRNA(Sec): step 1/1.</text>
</comment>
<comment type="subunit">
    <text evidence="1">Homodimer. The tRNA molecule binds across the dimer.</text>
</comment>
<comment type="subcellular location">
    <subcellularLocation>
        <location evidence="1">Cytoplasm</location>
    </subcellularLocation>
</comment>
<comment type="domain">
    <text evidence="1">Consists of two distinct domains, a catalytic core and a N-terminal extension that is involved in tRNA binding.</text>
</comment>
<comment type="similarity">
    <text evidence="1">Belongs to the class-II aminoacyl-tRNA synthetase family. Type-1 seryl-tRNA synthetase subfamily.</text>
</comment>
<keyword id="KW-0030">Aminoacyl-tRNA synthetase</keyword>
<keyword id="KW-0067">ATP-binding</keyword>
<keyword id="KW-0963">Cytoplasm</keyword>
<keyword id="KW-0436">Ligase</keyword>
<keyword id="KW-0547">Nucleotide-binding</keyword>
<keyword id="KW-0648">Protein biosynthesis</keyword>
<accession>Q3ASQ9</accession>
<proteinExistence type="inferred from homology"/>
<feature type="chain" id="PRO_1000019649" description="Serine--tRNA ligase">
    <location>
        <begin position="1"/>
        <end position="426"/>
    </location>
</feature>
<feature type="binding site" evidence="1">
    <location>
        <begin position="235"/>
        <end position="237"/>
    </location>
    <ligand>
        <name>L-serine</name>
        <dbReference type="ChEBI" id="CHEBI:33384"/>
    </ligand>
</feature>
<feature type="binding site" evidence="1">
    <location>
        <begin position="266"/>
        <end position="268"/>
    </location>
    <ligand>
        <name>ATP</name>
        <dbReference type="ChEBI" id="CHEBI:30616"/>
    </ligand>
</feature>
<feature type="binding site" evidence="1">
    <location>
        <position position="282"/>
    </location>
    <ligand>
        <name>ATP</name>
        <dbReference type="ChEBI" id="CHEBI:30616"/>
    </ligand>
</feature>
<feature type="binding site" evidence="1">
    <location>
        <position position="289"/>
    </location>
    <ligand>
        <name>L-serine</name>
        <dbReference type="ChEBI" id="CHEBI:33384"/>
    </ligand>
</feature>
<feature type="binding site" evidence="1">
    <location>
        <begin position="353"/>
        <end position="356"/>
    </location>
    <ligand>
        <name>ATP</name>
        <dbReference type="ChEBI" id="CHEBI:30616"/>
    </ligand>
</feature>
<feature type="binding site" evidence="1">
    <location>
        <position position="389"/>
    </location>
    <ligand>
        <name>L-serine</name>
        <dbReference type="ChEBI" id="CHEBI:33384"/>
    </ligand>
</feature>
<name>SYS_CHLCH</name>
<protein>
    <recommendedName>
        <fullName evidence="1">Serine--tRNA ligase</fullName>
        <ecNumber evidence="1">6.1.1.11</ecNumber>
    </recommendedName>
    <alternativeName>
        <fullName evidence="1">Seryl-tRNA synthetase</fullName>
        <shortName evidence="1">SerRS</shortName>
    </alternativeName>
    <alternativeName>
        <fullName evidence="1">Seryl-tRNA(Ser/Sec) synthetase</fullName>
    </alternativeName>
</protein>
<sequence>MLDIAYIRQNPDEVAAMLRHRQLASEEPKLQQLLECDRQRKELVQRSDEQKALRNKVSKEVAEIKKKGVGSPDELISQMKAVSDAITAMDSRLSELEAEMENLLLALPNKLHPSVPIGRSAEDNMVFGEPVHFEHSLNFPLKNHLELGKALRILDFERGAKVSGAGFPVYVGKGARLERALINFMLDMHTEQHGYTEVFPPFLVNQESLRGTGQWPKFADQVYYIGEDDLYAIPTAEVPLTNLHRGEMVETNALPISYTAYTACFRREAGSYGKDTRGFLRVHQFNKVEMVKFTRPEDSYTALEEIRHHAQAILEALKIPYRVLLLCSGDISANATKCYDIEVWSPAEEKYLEASSCSNFEEYQARRSNIRFKPDSKSKPEFVHTLNGSGLATSRLMVSLLEHYQTADGHIRVPNVLQRYTGFTEI</sequence>
<organism>
    <name type="scientific">Chlorobium chlorochromatii (strain CaD3)</name>
    <dbReference type="NCBI Taxonomy" id="340177"/>
    <lineage>
        <taxon>Bacteria</taxon>
        <taxon>Pseudomonadati</taxon>
        <taxon>Chlorobiota</taxon>
        <taxon>Chlorobiia</taxon>
        <taxon>Chlorobiales</taxon>
        <taxon>Chlorobiaceae</taxon>
        <taxon>Chlorobium/Pelodictyon group</taxon>
        <taxon>Chlorobium</taxon>
    </lineage>
</organism>
<evidence type="ECO:0000255" key="1">
    <source>
        <dbReference type="HAMAP-Rule" id="MF_00176"/>
    </source>
</evidence>
<reference key="1">
    <citation type="submission" date="2005-08" db="EMBL/GenBank/DDBJ databases">
        <title>Complete sequence of Chlorobium chlorochromatii CaD3.</title>
        <authorList>
            <consortium name="US DOE Joint Genome Institute"/>
            <person name="Copeland A."/>
            <person name="Lucas S."/>
            <person name="Lapidus A."/>
            <person name="Barry K."/>
            <person name="Detter J.C."/>
            <person name="Glavina T."/>
            <person name="Hammon N."/>
            <person name="Israni S."/>
            <person name="Pitluck S."/>
            <person name="Bryant D."/>
            <person name="Schmutz J."/>
            <person name="Larimer F."/>
            <person name="Land M."/>
            <person name="Kyrpides N."/>
            <person name="Ivanova N."/>
            <person name="Richardson P."/>
        </authorList>
    </citation>
    <scope>NUCLEOTIDE SEQUENCE [LARGE SCALE GENOMIC DNA]</scope>
    <source>
        <strain>CaD3</strain>
    </source>
</reference>
<dbReference type="EC" id="6.1.1.11" evidence="1"/>
<dbReference type="EMBL" id="CP000108">
    <property type="protein sequence ID" value="ABB27966.1"/>
    <property type="molecule type" value="Genomic_DNA"/>
</dbReference>
<dbReference type="SMR" id="Q3ASQ9"/>
<dbReference type="STRING" id="340177.Cag_0695"/>
<dbReference type="KEGG" id="cch:Cag_0695"/>
<dbReference type="eggNOG" id="COG0172">
    <property type="taxonomic scope" value="Bacteria"/>
</dbReference>
<dbReference type="HOGENOM" id="CLU_023797_0_1_10"/>
<dbReference type="OrthoDB" id="9804647at2"/>
<dbReference type="UniPathway" id="UPA00906">
    <property type="reaction ID" value="UER00895"/>
</dbReference>
<dbReference type="GO" id="GO:0005737">
    <property type="term" value="C:cytoplasm"/>
    <property type="evidence" value="ECO:0007669"/>
    <property type="project" value="UniProtKB-SubCell"/>
</dbReference>
<dbReference type="GO" id="GO:0005524">
    <property type="term" value="F:ATP binding"/>
    <property type="evidence" value="ECO:0007669"/>
    <property type="project" value="UniProtKB-UniRule"/>
</dbReference>
<dbReference type="GO" id="GO:0004828">
    <property type="term" value="F:serine-tRNA ligase activity"/>
    <property type="evidence" value="ECO:0007669"/>
    <property type="project" value="UniProtKB-UniRule"/>
</dbReference>
<dbReference type="GO" id="GO:0016260">
    <property type="term" value="P:selenocysteine biosynthetic process"/>
    <property type="evidence" value="ECO:0007669"/>
    <property type="project" value="UniProtKB-UniRule"/>
</dbReference>
<dbReference type="GO" id="GO:0006434">
    <property type="term" value="P:seryl-tRNA aminoacylation"/>
    <property type="evidence" value="ECO:0007669"/>
    <property type="project" value="UniProtKB-UniRule"/>
</dbReference>
<dbReference type="CDD" id="cd00770">
    <property type="entry name" value="SerRS_core"/>
    <property type="match status" value="1"/>
</dbReference>
<dbReference type="Gene3D" id="3.30.930.10">
    <property type="entry name" value="Bira Bifunctional Protein, Domain 2"/>
    <property type="match status" value="1"/>
</dbReference>
<dbReference type="Gene3D" id="1.10.287.40">
    <property type="entry name" value="Serine-tRNA synthetase, tRNA binding domain"/>
    <property type="match status" value="1"/>
</dbReference>
<dbReference type="HAMAP" id="MF_00176">
    <property type="entry name" value="Ser_tRNA_synth_type1"/>
    <property type="match status" value="1"/>
</dbReference>
<dbReference type="InterPro" id="IPR002314">
    <property type="entry name" value="aa-tRNA-synt_IIb"/>
</dbReference>
<dbReference type="InterPro" id="IPR006195">
    <property type="entry name" value="aa-tRNA-synth_II"/>
</dbReference>
<dbReference type="InterPro" id="IPR045864">
    <property type="entry name" value="aa-tRNA-synth_II/BPL/LPL"/>
</dbReference>
<dbReference type="InterPro" id="IPR002317">
    <property type="entry name" value="Ser-tRNA-ligase_type_1"/>
</dbReference>
<dbReference type="InterPro" id="IPR015866">
    <property type="entry name" value="Ser-tRNA-synth_1_N"/>
</dbReference>
<dbReference type="InterPro" id="IPR042103">
    <property type="entry name" value="SerRS_1_N_sf"/>
</dbReference>
<dbReference type="InterPro" id="IPR033729">
    <property type="entry name" value="SerRS_core"/>
</dbReference>
<dbReference type="InterPro" id="IPR010978">
    <property type="entry name" value="tRNA-bd_arm"/>
</dbReference>
<dbReference type="NCBIfam" id="TIGR00414">
    <property type="entry name" value="serS"/>
    <property type="match status" value="1"/>
</dbReference>
<dbReference type="PANTHER" id="PTHR43697:SF1">
    <property type="entry name" value="SERINE--TRNA LIGASE"/>
    <property type="match status" value="1"/>
</dbReference>
<dbReference type="PANTHER" id="PTHR43697">
    <property type="entry name" value="SERYL-TRNA SYNTHETASE"/>
    <property type="match status" value="1"/>
</dbReference>
<dbReference type="Pfam" id="PF02403">
    <property type="entry name" value="Seryl_tRNA_N"/>
    <property type="match status" value="1"/>
</dbReference>
<dbReference type="Pfam" id="PF00587">
    <property type="entry name" value="tRNA-synt_2b"/>
    <property type="match status" value="1"/>
</dbReference>
<dbReference type="PIRSF" id="PIRSF001529">
    <property type="entry name" value="Ser-tRNA-synth_IIa"/>
    <property type="match status" value="1"/>
</dbReference>
<dbReference type="PRINTS" id="PR00981">
    <property type="entry name" value="TRNASYNTHSER"/>
</dbReference>
<dbReference type="SUPFAM" id="SSF55681">
    <property type="entry name" value="Class II aaRS and biotin synthetases"/>
    <property type="match status" value="1"/>
</dbReference>
<dbReference type="SUPFAM" id="SSF46589">
    <property type="entry name" value="tRNA-binding arm"/>
    <property type="match status" value="1"/>
</dbReference>
<dbReference type="PROSITE" id="PS50862">
    <property type="entry name" value="AA_TRNA_LIGASE_II"/>
    <property type="match status" value="1"/>
</dbReference>
<gene>
    <name evidence="1" type="primary">serS</name>
    <name type="ordered locus">Cag_0695</name>
</gene>